<name>T53G5_HUMAN</name>
<evidence type="ECO:0000256" key="1">
    <source>
        <dbReference type="SAM" id="MobiDB-lite"/>
    </source>
</evidence>
<evidence type="ECO:0000269" key="2">
    <source>
    </source>
</evidence>
<organism>
    <name type="scientific">Homo sapiens</name>
    <name type="common">Human</name>
    <dbReference type="NCBI Taxonomy" id="9606"/>
    <lineage>
        <taxon>Eukaryota</taxon>
        <taxon>Metazoa</taxon>
        <taxon>Chordata</taxon>
        <taxon>Craniata</taxon>
        <taxon>Vertebrata</taxon>
        <taxon>Euteleostomi</taxon>
        <taxon>Mammalia</taxon>
        <taxon>Eutheria</taxon>
        <taxon>Euarchontoglires</taxon>
        <taxon>Primates</taxon>
        <taxon>Haplorrhini</taxon>
        <taxon>Catarrhini</taxon>
        <taxon>Hominidae</taxon>
        <taxon>Homo</taxon>
    </lineage>
</organism>
<reference key="1">
    <citation type="journal article" date="2000" name="Genes Chromosomes Cancer">
        <title>Isolation and characterization of a novel TP53-inducible gene, TP53TG5, which suppresses growth and shows cell cycle-dependent transition of expression.</title>
        <authorList>
            <person name="Isaka S."/>
            <person name="Takei Y."/>
            <person name="Tokino T."/>
            <person name="Koyama K."/>
            <person name="Miyoshi Y."/>
            <person name="Suzuki M."/>
            <person name="Takahashi E."/>
            <person name="Azuma C."/>
            <person name="Murata Y."/>
            <person name="Nakamura Y."/>
        </authorList>
    </citation>
    <scope>NUCLEOTIDE SEQUENCE [MRNA]</scope>
    <scope>FUNCTION</scope>
    <scope>INTERACTION WITH TP53</scope>
    <scope>SUBCELLULAR LOCATION</scope>
    <scope>TISSUE SPECIFICITY</scope>
    <scope>INDUCTION</scope>
    <source>
        <tissue>Testis</tissue>
    </source>
</reference>
<reference key="2">
    <citation type="journal article" date="2001" name="Nature">
        <title>The DNA sequence and comparative analysis of human chromosome 20.</title>
        <authorList>
            <person name="Deloukas P."/>
            <person name="Matthews L.H."/>
            <person name="Ashurst J.L."/>
            <person name="Burton J."/>
            <person name="Gilbert J.G.R."/>
            <person name="Jones M."/>
            <person name="Stavrides G."/>
            <person name="Almeida J.P."/>
            <person name="Babbage A.K."/>
            <person name="Bagguley C.L."/>
            <person name="Bailey J."/>
            <person name="Barlow K.F."/>
            <person name="Bates K.N."/>
            <person name="Beard L.M."/>
            <person name="Beare D.M."/>
            <person name="Beasley O.P."/>
            <person name="Bird C.P."/>
            <person name="Blakey S.E."/>
            <person name="Bridgeman A.M."/>
            <person name="Brown A.J."/>
            <person name="Buck D."/>
            <person name="Burrill W.D."/>
            <person name="Butler A.P."/>
            <person name="Carder C."/>
            <person name="Carter N.P."/>
            <person name="Chapman J.C."/>
            <person name="Clamp M."/>
            <person name="Clark G."/>
            <person name="Clark L.N."/>
            <person name="Clark S.Y."/>
            <person name="Clee C.M."/>
            <person name="Clegg S."/>
            <person name="Cobley V.E."/>
            <person name="Collier R.E."/>
            <person name="Connor R.E."/>
            <person name="Corby N.R."/>
            <person name="Coulson A."/>
            <person name="Coville G.J."/>
            <person name="Deadman R."/>
            <person name="Dhami P.D."/>
            <person name="Dunn M."/>
            <person name="Ellington A.G."/>
            <person name="Frankland J.A."/>
            <person name="Fraser A."/>
            <person name="French L."/>
            <person name="Garner P."/>
            <person name="Grafham D.V."/>
            <person name="Griffiths C."/>
            <person name="Griffiths M.N.D."/>
            <person name="Gwilliam R."/>
            <person name="Hall R.E."/>
            <person name="Hammond S."/>
            <person name="Harley J.L."/>
            <person name="Heath P.D."/>
            <person name="Ho S."/>
            <person name="Holden J.L."/>
            <person name="Howden P.J."/>
            <person name="Huckle E."/>
            <person name="Hunt A.R."/>
            <person name="Hunt S.E."/>
            <person name="Jekosch K."/>
            <person name="Johnson C.M."/>
            <person name="Johnson D."/>
            <person name="Kay M.P."/>
            <person name="Kimberley A.M."/>
            <person name="King A."/>
            <person name="Knights A."/>
            <person name="Laird G.K."/>
            <person name="Lawlor S."/>
            <person name="Lehvaeslaiho M.H."/>
            <person name="Leversha M.A."/>
            <person name="Lloyd C."/>
            <person name="Lloyd D.M."/>
            <person name="Lovell J.D."/>
            <person name="Marsh V.L."/>
            <person name="Martin S.L."/>
            <person name="McConnachie L.J."/>
            <person name="McLay K."/>
            <person name="McMurray A.A."/>
            <person name="Milne S.A."/>
            <person name="Mistry D."/>
            <person name="Moore M.J.F."/>
            <person name="Mullikin J.C."/>
            <person name="Nickerson T."/>
            <person name="Oliver K."/>
            <person name="Parker A."/>
            <person name="Patel R."/>
            <person name="Pearce T.A.V."/>
            <person name="Peck A.I."/>
            <person name="Phillimore B.J.C.T."/>
            <person name="Prathalingam S.R."/>
            <person name="Plumb R.W."/>
            <person name="Ramsay H."/>
            <person name="Rice C.M."/>
            <person name="Ross M.T."/>
            <person name="Scott C.E."/>
            <person name="Sehra H.K."/>
            <person name="Shownkeen R."/>
            <person name="Sims S."/>
            <person name="Skuce C.D."/>
            <person name="Smith M.L."/>
            <person name="Soderlund C."/>
            <person name="Steward C.A."/>
            <person name="Sulston J.E."/>
            <person name="Swann R.M."/>
            <person name="Sycamore N."/>
            <person name="Taylor R."/>
            <person name="Tee L."/>
            <person name="Thomas D.W."/>
            <person name="Thorpe A."/>
            <person name="Tracey A."/>
            <person name="Tromans A.C."/>
            <person name="Vaudin M."/>
            <person name="Wall M."/>
            <person name="Wallis J.M."/>
            <person name="Whitehead S.L."/>
            <person name="Whittaker P."/>
            <person name="Willey D.L."/>
            <person name="Williams L."/>
            <person name="Williams S.A."/>
            <person name="Wilming L."/>
            <person name="Wray P.W."/>
            <person name="Hubbard T."/>
            <person name="Durbin R.M."/>
            <person name="Bentley D.R."/>
            <person name="Beck S."/>
            <person name="Rogers J."/>
        </authorList>
    </citation>
    <scope>NUCLEOTIDE SEQUENCE [LARGE SCALE GENOMIC DNA]</scope>
</reference>
<reference key="3">
    <citation type="journal article" date="2004" name="Genome Res.">
        <title>The status, quality, and expansion of the NIH full-length cDNA project: the Mammalian Gene Collection (MGC).</title>
        <authorList>
            <consortium name="The MGC Project Team"/>
        </authorList>
    </citation>
    <scope>NUCLEOTIDE SEQUENCE [LARGE SCALE MRNA]</scope>
    <source>
        <tissue>Brain</tissue>
    </source>
</reference>
<protein>
    <recommendedName>
        <fullName>TP53-target gene 5 protein</fullName>
    </recommendedName>
    <alternativeName>
        <fullName>TP53-inducible gene 5 protein</fullName>
    </alternativeName>
</protein>
<feature type="chain" id="PRO_0000072405" description="TP53-target gene 5 protein">
    <location>
        <begin position="1"/>
        <end position="290"/>
    </location>
</feature>
<feature type="region of interest" description="Disordered" evidence="1">
    <location>
        <begin position="1"/>
        <end position="29"/>
    </location>
</feature>
<feature type="region of interest" description="Disordered" evidence="1">
    <location>
        <begin position="114"/>
        <end position="178"/>
    </location>
</feature>
<feature type="compositionally biased region" description="Basic residues" evidence="1">
    <location>
        <begin position="1"/>
        <end position="13"/>
    </location>
</feature>
<feature type="compositionally biased region" description="Basic and acidic residues" evidence="1">
    <location>
        <begin position="16"/>
        <end position="26"/>
    </location>
</feature>
<feature type="compositionally biased region" description="Basic and acidic residues" evidence="1">
    <location>
        <begin position="114"/>
        <end position="130"/>
    </location>
</feature>
<feature type="compositionally biased region" description="Basic and acidic residues" evidence="1">
    <location>
        <begin position="138"/>
        <end position="167"/>
    </location>
</feature>
<feature type="sequence variant" id="VAR_051397" description="In dbSNP:rs2231616.">
    <original>R</original>
    <variation>H</variation>
    <location>
        <position position="57"/>
    </location>
</feature>
<feature type="sequence variant" id="VAR_051398" description="In dbSNP:rs2231619.">
    <original>V</original>
    <variation>A</variation>
    <location>
        <position position="172"/>
    </location>
</feature>
<feature type="sequence variant" id="VAR_051399" description="In dbSNP:rs2231620.">
    <original>R</original>
    <variation>H</variation>
    <location>
        <position position="191"/>
    </location>
</feature>
<feature type="sequence variant" id="VAR_051400" description="In dbSNP:rs2231622.">
    <original>H</original>
    <variation>Q</variation>
    <location>
        <position position="219"/>
    </location>
</feature>
<feature type="sequence variant" id="VAR_051401" description="In dbSNP:rs2231623.">
    <original>P</original>
    <variation>L</variation>
    <location>
        <position position="221"/>
    </location>
</feature>
<feature type="sequence variant" id="VAR_051402" description="In dbSNP:rs2231627.">
    <original>V</original>
    <variation>A</variation>
    <location>
        <position position="257"/>
    </location>
</feature>
<feature type="sequence variant" id="VAR_051403" description="In dbSNP:rs2231628.">
    <original>H</original>
    <variation>N</variation>
    <location>
        <position position="275"/>
    </location>
</feature>
<accession>Q9Y2B4</accession>
<gene>
    <name type="primary">TP53TG5</name>
    <name type="synonym">C20orf10</name>
</gene>
<sequence>MSPSAKKRPKNSRVSKMQDEKLRDETEQPVSKVIERNRLRTVLKNLSLLKLLKSSNRRIQELHKLAKRCWHSLLSVPKILRISSGENSACNKTKQNNEEFQEIGCSEKELKSKKLESTGDPKKKEYKEWKSQVQSGMRNKEKTSLAAMPRKEKHIEPEVPRTSRDDSLNPGVQGRQPLTEGPRVIFIKPYRNRTPMGHMKQLDVADQWIWFEGLPTRIHLPAPRVMCRSSTLRWVKRRCTRFCSASLEMPMWHPYKVDVTWTRARGASRGWRSRHQLKGRNGWRNSRVYK</sequence>
<comment type="function">
    <text evidence="2">May play a significant role in p53/TP53-mediating signaling pathway.</text>
</comment>
<comment type="subunit">
    <text evidence="2">Interacts with p53/TP53.</text>
</comment>
<comment type="interaction">
    <interactant intactId="EBI-21870909">
        <id>Q9Y2B4</id>
    </interactant>
    <interactant intactId="EBI-25860013">
        <id>P28799-2</id>
        <label>GRN</label>
    </interactant>
    <organismsDiffer>false</organismsDiffer>
    <experiments>3</experiments>
</comment>
<comment type="interaction">
    <interactant intactId="EBI-21870909">
        <id>Q9Y2B4</id>
    </interactant>
    <interactant intactId="EBI-10178578">
        <id>I6L9F6</id>
        <label>NEFL</label>
    </interactant>
    <organismsDiffer>false</organismsDiffer>
    <experiments>3</experiments>
</comment>
<comment type="subcellular location">
    <subcellularLocation>
        <location evidence="2">Cytoplasm</location>
    </subcellularLocation>
    <subcellularLocation>
        <location evidence="2">Nucleus</location>
    </subcellularLocation>
    <text>Cell cycle dependent intracellular localization.</text>
</comment>
<comment type="tissue specificity">
    <text evidence="2">Highly expressed in heart, brain and small intestine. Less abundant in skeletal muscle, spleen, prostate, ovary and colon. A smaller transcript is expressed specifically in the testis.</text>
</comment>
<comment type="induction">
    <text evidence="2">By p53/TP53, UV irradiation, by hydrogen peroxide treatment or by treatment with a DNA-damaging reagent.</text>
</comment>
<proteinExistence type="evidence at protein level"/>
<dbReference type="EMBL" id="AB017802">
    <property type="protein sequence ID" value="BAA76405.1"/>
    <property type="molecule type" value="mRNA"/>
</dbReference>
<dbReference type="EMBL" id="AL021578">
    <property type="status" value="NOT_ANNOTATED_CDS"/>
    <property type="molecule type" value="Genomic_DNA"/>
</dbReference>
<dbReference type="EMBL" id="BC036785">
    <property type="protein sequence ID" value="AAH36785.1"/>
    <property type="molecule type" value="mRNA"/>
</dbReference>
<dbReference type="CCDS" id="CCDS13352.1"/>
<dbReference type="RefSeq" id="NP_055292.1">
    <property type="nucleotide sequence ID" value="NM_014477.3"/>
</dbReference>
<dbReference type="SMR" id="Q9Y2B4"/>
<dbReference type="BioGRID" id="118120">
    <property type="interactions" value="8"/>
</dbReference>
<dbReference type="FunCoup" id="Q9Y2B4">
    <property type="interactions" value="493"/>
</dbReference>
<dbReference type="IntAct" id="Q9Y2B4">
    <property type="interactions" value="8"/>
</dbReference>
<dbReference type="STRING" id="9606.ENSP00000361811"/>
<dbReference type="GlyGen" id="Q9Y2B4">
    <property type="glycosylation" value="2 sites, 2 N-linked glycans (1 site), 1 O-linked glycan (1 site)"/>
</dbReference>
<dbReference type="iPTMnet" id="Q9Y2B4"/>
<dbReference type="PhosphoSitePlus" id="Q9Y2B4"/>
<dbReference type="BioMuta" id="TP53TG5"/>
<dbReference type="DMDM" id="23822283"/>
<dbReference type="MassIVE" id="Q9Y2B4"/>
<dbReference type="PaxDb" id="9606-ENSP00000361811"/>
<dbReference type="PeptideAtlas" id="Q9Y2B4"/>
<dbReference type="ProteomicsDB" id="85719"/>
<dbReference type="Antibodypedia" id="27611">
    <property type="antibodies" value="220 antibodies from 18 providers"/>
</dbReference>
<dbReference type="DNASU" id="27296"/>
<dbReference type="Ensembl" id="ENST00000372726.5">
    <property type="protein sequence ID" value="ENSP00000361811.3"/>
    <property type="gene ID" value="ENSG00000124251.11"/>
</dbReference>
<dbReference type="GeneID" id="27296"/>
<dbReference type="KEGG" id="hsa:27296"/>
<dbReference type="MANE-Select" id="ENST00000372726.5">
    <property type="protein sequence ID" value="ENSP00000361811.3"/>
    <property type="RefSeq nucleotide sequence ID" value="NM_014477.3"/>
    <property type="RefSeq protein sequence ID" value="NP_055292.1"/>
</dbReference>
<dbReference type="UCSC" id="uc002xny.4">
    <property type="organism name" value="human"/>
</dbReference>
<dbReference type="AGR" id="HGNC:15856"/>
<dbReference type="CTD" id="27296"/>
<dbReference type="GeneCards" id="TP53TG5"/>
<dbReference type="HGNC" id="HGNC:15856">
    <property type="gene designation" value="TP53TG5"/>
</dbReference>
<dbReference type="HPA" id="ENSG00000124251">
    <property type="expression patterns" value="Tissue enriched (testis)"/>
</dbReference>
<dbReference type="MIM" id="617316">
    <property type="type" value="gene"/>
</dbReference>
<dbReference type="neXtProt" id="NX_Q9Y2B4"/>
<dbReference type="OpenTargets" id="ENSG00000124251"/>
<dbReference type="PharmGKB" id="PA25639"/>
<dbReference type="VEuPathDB" id="HostDB:ENSG00000124251"/>
<dbReference type="eggNOG" id="ENOG502SYWX">
    <property type="taxonomic scope" value="Eukaryota"/>
</dbReference>
<dbReference type="GeneTree" id="ENSGT00390000017387"/>
<dbReference type="HOGENOM" id="CLU_083634_0_0_1"/>
<dbReference type="InParanoid" id="Q9Y2B4"/>
<dbReference type="OMA" id="GWRSRSQ"/>
<dbReference type="OrthoDB" id="9120343at2759"/>
<dbReference type="PAN-GO" id="Q9Y2B4">
    <property type="GO annotations" value="0 GO annotations based on evolutionary models"/>
</dbReference>
<dbReference type="PhylomeDB" id="Q9Y2B4"/>
<dbReference type="TreeFam" id="TF337759"/>
<dbReference type="PathwayCommons" id="Q9Y2B4"/>
<dbReference type="SignaLink" id="Q9Y2B4"/>
<dbReference type="BioGRID-ORCS" id="27296">
    <property type="hits" value="15 hits in 1142 CRISPR screens"/>
</dbReference>
<dbReference type="GenomeRNAi" id="27296"/>
<dbReference type="Pharos" id="Q9Y2B4">
    <property type="development level" value="Tdark"/>
</dbReference>
<dbReference type="PRO" id="PR:Q9Y2B4"/>
<dbReference type="Proteomes" id="UP000005640">
    <property type="component" value="Chromosome 20"/>
</dbReference>
<dbReference type="RNAct" id="Q9Y2B4">
    <property type="molecule type" value="protein"/>
</dbReference>
<dbReference type="Bgee" id="ENSG00000124251">
    <property type="expression patterns" value="Expressed in C1 segment of cervical spinal cord and 125 other cell types or tissues"/>
</dbReference>
<dbReference type="GO" id="GO:0005694">
    <property type="term" value="C:chromosome"/>
    <property type="evidence" value="ECO:0000314"/>
    <property type="project" value="HPA"/>
</dbReference>
<dbReference type="GO" id="GO:0005737">
    <property type="term" value="C:cytoplasm"/>
    <property type="evidence" value="ECO:0007669"/>
    <property type="project" value="UniProtKB-SubCell"/>
</dbReference>
<dbReference type="GO" id="GO:0005730">
    <property type="term" value="C:nucleolus"/>
    <property type="evidence" value="ECO:0000314"/>
    <property type="project" value="HPA"/>
</dbReference>
<dbReference type="GO" id="GO:0005634">
    <property type="term" value="C:nucleus"/>
    <property type="evidence" value="ECO:0007005"/>
    <property type="project" value="UniProtKB"/>
</dbReference>
<dbReference type="GO" id="GO:0035556">
    <property type="term" value="P:intracellular signal transduction"/>
    <property type="evidence" value="ECO:0000303"/>
    <property type="project" value="UniProtKB"/>
</dbReference>
<dbReference type="GO" id="GO:0030308">
    <property type="term" value="P:negative regulation of cell growth"/>
    <property type="evidence" value="ECO:0000303"/>
    <property type="project" value="UniProtKB"/>
</dbReference>
<dbReference type="InterPro" id="IPR029290">
    <property type="entry name" value="TP53TG5"/>
</dbReference>
<dbReference type="PANTHER" id="PTHR15562">
    <property type="entry name" value="TP53-TARGET GENE 5 PROTEIN"/>
    <property type="match status" value="1"/>
</dbReference>
<dbReference type="PANTHER" id="PTHR15562:SF0">
    <property type="entry name" value="TP53-TARGET GENE 5 PROTEIN"/>
    <property type="match status" value="1"/>
</dbReference>
<dbReference type="Pfam" id="PF15331">
    <property type="entry name" value="TP53IP5"/>
    <property type="match status" value="1"/>
</dbReference>
<keyword id="KW-0963">Cytoplasm</keyword>
<keyword id="KW-0539">Nucleus</keyword>
<keyword id="KW-1267">Proteomics identification</keyword>
<keyword id="KW-1185">Reference proteome</keyword>